<reference key="1">
    <citation type="journal article" date="1996" name="Mech. Dev.">
        <title>Olfaction in birds: differential embryonic expression of nine putative odorant receptor genes in the avian olfactory system.</title>
        <authorList>
            <person name="Nef S."/>
            <person name="Allaman I."/>
            <person name="Fiumelli H."/>
            <person name="de Castro E."/>
            <person name="Nef P."/>
        </authorList>
    </citation>
    <scope>NUCLEOTIDE SEQUENCE [GENOMIC DNA]</scope>
    <source>
        <tissue>Olfactory epithelium</tissue>
    </source>
</reference>
<comment type="function">
    <text evidence="3">Odorant receptor.</text>
</comment>
<comment type="subcellular location">
    <subcellularLocation>
        <location>Cell membrane</location>
        <topology>Multi-pass membrane protein</topology>
    </subcellularLocation>
</comment>
<comment type="similarity">
    <text evidence="2">Belongs to the G-protein coupled receptor 1 family.</text>
</comment>
<proteinExistence type="inferred from homology"/>
<keyword id="KW-1003">Cell membrane</keyword>
<keyword id="KW-1015">Disulfide bond</keyword>
<keyword id="KW-0297">G-protein coupled receptor</keyword>
<keyword id="KW-0325">Glycoprotein</keyword>
<keyword id="KW-0472">Membrane</keyword>
<keyword id="KW-0552">Olfaction</keyword>
<keyword id="KW-0675">Receptor</keyword>
<keyword id="KW-1185">Reference proteome</keyword>
<keyword id="KW-0716">Sensory transduction</keyword>
<keyword id="KW-0807">Transducer</keyword>
<keyword id="KW-0812">Transmembrane</keyword>
<keyword id="KW-1133">Transmembrane helix</keyword>
<gene>
    <name type="primary">COR6</name>
</gene>
<evidence type="ECO:0000255" key="1"/>
<evidence type="ECO:0000255" key="2">
    <source>
        <dbReference type="PROSITE-ProRule" id="PRU00521"/>
    </source>
</evidence>
<evidence type="ECO:0000305" key="3"/>
<accession>P37072</accession>
<accession>Q98912</accession>
<name>OLF6_CHICK</name>
<dbReference type="EMBL" id="Z79590">
    <property type="protein sequence ID" value="CAB01851.1"/>
    <property type="molecule type" value="Genomic_DNA"/>
</dbReference>
<dbReference type="RefSeq" id="NP_001026715.1">
    <property type="nucleotide sequence ID" value="NM_001031544.1"/>
</dbReference>
<dbReference type="SMR" id="P37072"/>
<dbReference type="FunCoup" id="P37072">
    <property type="interactions" value="7"/>
</dbReference>
<dbReference type="GlyCosmos" id="P37072">
    <property type="glycosylation" value="1 site, No reported glycans"/>
</dbReference>
<dbReference type="GlyGen" id="P37072">
    <property type="glycosylation" value="1 site"/>
</dbReference>
<dbReference type="PaxDb" id="9031-ENSGALP00000007016"/>
<dbReference type="GeneID" id="428826"/>
<dbReference type="KEGG" id="gga:428826"/>
<dbReference type="CTD" id="428826"/>
<dbReference type="VEuPathDB" id="HostDB:geneid_428826"/>
<dbReference type="eggNOG" id="ENOG502RF13">
    <property type="taxonomic scope" value="Eukaryota"/>
</dbReference>
<dbReference type="InParanoid" id="P37072"/>
<dbReference type="OrthoDB" id="9889152at2759"/>
<dbReference type="PhylomeDB" id="P37072"/>
<dbReference type="PRO" id="PR:P37072"/>
<dbReference type="Proteomes" id="UP000000539">
    <property type="component" value="Unassembled WGS sequence"/>
</dbReference>
<dbReference type="GO" id="GO:0005886">
    <property type="term" value="C:plasma membrane"/>
    <property type="evidence" value="ECO:0007669"/>
    <property type="project" value="UniProtKB-SubCell"/>
</dbReference>
<dbReference type="GO" id="GO:0004930">
    <property type="term" value="F:G protein-coupled receptor activity"/>
    <property type="evidence" value="ECO:0007669"/>
    <property type="project" value="UniProtKB-KW"/>
</dbReference>
<dbReference type="GO" id="GO:0005549">
    <property type="term" value="F:odorant binding"/>
    <property type="evidence" value="ECO:0000318"/>
    <property type="project" value="GO_Central"/>
</dbReference>
<dbReference type="GO" id="GO:0004984">
    <property type="term" value="F:olfactory receptor activity"/>
    <property type="evidence" value="ECO:0000318"/>
    <property type="project" value="GO_Central"/>
</dbReference>
<dbReference type="FunFam" id="1.10.1220.70:FF:000001">
    <property type="entry name" value="Olfactory receptor"/>
    <property type="match status" value="1"/>
</dbReference>
<dbReference type="FunFam" id="1.20.1070.10:FF:000003">
    <property type="entry name" value="Olfactory receptor"/>
    <property type="match status" value="1"/>
</dbReference>
<dbReference type="Gene3D" id="1.20.1070.10">
    <property type="entry name" value="Rhodopsin 7-helix transmembrane proteins"/>
    <property type="match status" value="1"/>
</dbReference>
<dbReference type="InterPro" id="IPR000276">
    <property type="entry name" value="GPCR_Rhodpsn"/>
</dbReference>
<dbReference type="InterPro" id="IPR017452">
    <property type="entry name" value="GPCR_Rhodpsn_7TM"/>
</dbReference>
<dbReference type="InterPro" id="IPR000725">
    <property type="entry name" value="Olfact_rcpt"/>
</dbReference>
<dbReference type="PANTHER" id="PTHR48018">
    <property type="entry name" value="OLFACTORY RECEPTOR"/>
    <property type="match status" value="1"/>
</dbReference>
<dbReference type="Pfam" id="PF13853">
    <property type="entry name" value="7tm_4"/>
    <property type="match status" value="1"/>
</dbReference>
<dbReference type="PRINTS" id="PR00237">
    <property type="entry name" value="GPCRRHODOPSN"/>
</dbReference>
<dbReference type="PRINTS" id="PR00245">
    <property type="entry name" value="OLFACTORYR"/>
</dbReference>
<dbReference type="SUPFAM" id="SSF81321">
    <property type="entry name" value="Family A G protein-coupled receptor-like"/>
    <property type="match status" value="1"/>
</dbReference>
<dbReference type="PROSITE" id="PS50262">
    <property type="entry name" value="G_PROTEIN_RECEP_F1_2"/>
    <property type="match status" value="1"/>
</dbReference>
<feature type="chain" id="PRO_0000150885" description="Olfactory receptor-like protein COR6">
    <location>
        <begin position="1"/>
        <end position="312"/>
    </location>
</feature>
<feature type="topological domain" description="Extracellular" evidence="1">
    <location>
        <begin position="1"/>
        <end position="26"/>
    </location>
</feature>
<feature type="transmembrane region" description="Helical; Name=1" evidence="1">
    <location>
        <begin position="27"/>
        <end position="49"/>
    </location>
</feature>
<feature type="topological domain" description="Cytoplasmic" evidence="1">
    <location>
        <begin position="50"/>
        <end position="57"/>
    </location>
</feature>
<feature type="transmembrane region" description="Helical; Name=2" evidence="1">
    <location>
        <begin position="58"/>
        <end position="79"/>
    </location>
</feature>
<feature type="topological domain" description="Extracellular" evidence="1">
    <location>
        <begin position="80"/>
        <end position="100"/>
    </location>
</feature>
<feature type="transmembrane region" description="Helical; Name=3" evidence="1">
    <location>
        <begin position="101"/>
        <end position="120"/>
    </location>
</feature>
<feature type="topological domain" description="Cytoplasmic" evidence="1">
    <location>
        <begin position="121"/>
        <end position="139"/>
    </location>
</feature>
<feature type="transmembrane region" description="Helical; Name=4" evidence="1">
    <location>
        <begin position="140"/>
        <end position="164"/>
    </location>
</feature>
<feature type="topological domain" description="Extracellular" evidence="1">
    <location>
        <begin position="165"/>
        <end position="205"/>
    </location>
</feature>
<feature type="transmembrane region" description="Helical; Name=5" evidence="1">
    <location>
        <begin position="206"/>
        <end position="226"/>
    </location>
</feature>
<feature type="topological domain" description="Cytoplasmic" evidence="1">
    <location>
        <begin position="227"/>
        <end position="239"/>
    </location>
</feature>
<feature type="transmembrane region" description="Helical; Name=6" evidence="1">
    <location>
        <begin position="240"/>
        <end position="260"/>
    </location>
</feature>
<feature type="topological domain" description="Extracellular" evidence="1">
    <location>
        <begin position="261"/>
        <end position="271"/>
    </location>
</feature>
<feature type="transmembrane region" description="Helical; Name=7" evidence="1">
    <location>
        <begin position="272"/>
        <end position="292"/>
    </location>
</feature>
<feature type="topological domain" description="Cytoplasmic" evidence="1">
    <location>
        <begin position="293"/>
        <end position="312"/>
    </location>
</feature>
<feature type="glycosylation site" description="N-linked (GlcNAc...) asparagine" evidence="1">
    <location>
        <position position="5"/>
    </location>
</feature>
<feature type="disulfide bond" evidence="2">
    <location>
        <begin position="97"/>
        <end position="179"/>
    </location>
</feature>
<protein>
    <recommendedName>
        <fullName>Olfactory receptor-like protein COR6</fullName>
    </recommendedName>
</protein>
<sequence length="312" mass="35179">MASGNCTTPTTFILSGLTDNPGLQMPLFMVFLAIYTITLLTNLGLIALISIDLQLQTPMYIFLQNLSFTDAVYSTVITPKMLATFLEETKTISYVGCILQYFSFVLLTVRECLLLAVMAYDRYAAICKPLLYPAIMTKAVCWRLVKGLYSLAFLNFLVHTSGLLKLSFCSSNVVNHFFCDNSPLFQISSSSTALNELLVFIFGSLFVMSSIITILISYVFIILTVVRIRSKERKYKAFSTCTSHLMAVSLFHGTIVFMYFQPANNFSLDKDKIMSLFYTVVIPMLNPLIYSWRNKEVKDALHRAIATAVLFH</sequence>
<organism>
    <name type="scientific">Gallus gallus</name>
    <name type="common">Chicken</name>
    <dbReference type="NCBI Taxonomy" id="9031"/>
    <lineage>
        <taxon>Eukaryota</taxon>
        <taxon>Metazoa</taxon>
        <taxon>Chordata</taxon>
        <taxon>Craniata</taxon>
        <taxon>Vertebrata</taxon>
        <taxon>Euteleostomi</taxon>
        <taxon>Archelosauria</taxon>
        <taxon>Archosauria</taxon>
        <taxon>Dinosauria</taxon>
        <taxon>Saurischia</taxon>
        <taxon>Theropoda</taxon>
        <taxon>Coelurosauria</taxon>
        <taxon>Aves</taxon>
        <taxon>Neognathae</taxon>
        <taxon>Galloanserae</taxon>
        <taxon>Galliformes</taxon>
        <taxon>Phasianidae</taxon>
        <taxon>Phasianinae</taxon>
        <taxon>Gallus</taxon>
    </lineage>
</organism>